<sequence>MLLWGRWKLAAGLAGLALSLELFYRYMRRRKPLREVLFFPVPVTCIEPVLSPMKQCSCPLPHTDSAFSRLLVQLLGAQRSLELCVFTFSSPSLARALLILHRRDVRVRVITDNDYMAAPGSQIGPLRSAGVAVRHDQSSGYMHHKFAVVDGTVVLTGSLNWTVQAFQSNKENILITDDTVIVKAYQKEFERLWEEYDPATYNFFPEKENK</sequence>
<feature type="chain" id="PRO_0000325913" description="Mitochondrial cardiolipin hydrolase">
    <location>
        <begin position="1"/>
        <end position="210"/>
    </location>
</feature>
<feature type="topological domain" description="Mitochondrial intermembrane" evidence="3">
    <location>
        <begin position="1"/>
        <end position="5"/>
    </location>
</feature>
<feature type="transmembrane region" description="Helical" evidence="3">
    <location>
        <begin position="6"/>
        <end position="24"/>
    </location>
</feature>
<feature type="topological domain" description="Cytoplasmic" evidence="3">
    <location>
        <begin position="25"/>
        <end position="210"/>
    </location>
</feature>
<feature type="domain" description="PLD phosphodiesterase" evidence="4">
    <location>
        <begin position="138"/>
        <end position="165"/>
    </location>
</feature>
<feature type="active site" evidence="4">
    <location>
        <position position="143"/>
    </location>
</feature>
<feature type="active site" evidence="4">
    <location>
        <position position="145"/>
    </location>
</feature>
<feature type="active site" evidence="4">
    <location>
        <position position="150"/>
    </location>
</feature>
<dbReference type="EC" id="3.1.-.-" evidence="1"/>
<dbReference type="EC" id="3.1.4.-" evidence="2"/>
<dbReference type="EMBL" id="BC128979">
    <property type="protein sequence ID" value="AAI28980.1"/>
    <property type="molecule type" value="mRNA"/>
</dbReference>
<dbReference type="RefSeq" id="NP_001091258.1">
    <property type="nucleotide sequence ID" value="NM_001097789.1"/>
</dbReference>
<dbReference type="SMR" id="A1L1C2"/>
<dbReference type="DNASU" id="100037063"/>
<dbReference type="GeneID" id="100037063"/>
<dbReference type="KEGG" id="xla:100037063"/>
<dbReference type="AGR" id="Xenbase:XB-GENE-5729953"/>
<dbReference type="CTD" id="100037063"/>
<dbReference type="Xenbase" id="XB-GENE-5729953">
    <property type="gene designation" value="pld6.S"/>
</dbReference>
<dbReference type="OrthoDB" id="5205528at2759"/>
<dbReference type="Proteomes" id="UP000186698">
    <property type="component" value="Chromosome 9_10S"/>
</dbReference>
<dbReference type="Bgee" id="100037063">
    <property type="expression patterns" value="Expressed in oocyte and 10 other cell types or tissues"/>
</dbReference>
<dbReference type="GO" id="GO:0005741">
    <property type="term" value="C:mitochondrial outer membrane"/>
    <property type="evidence" value="ECO:0000250"/>
    <property type="project" value="UniProtKB"/>
</dbReference>
<dbReference type="GO" id="GO:0005739">
    <property type="term" value="C:mitochondrion"/>
    <property type="evidence" value="ECO:0000318"/>
    <property type="project" value="GO_Central"/>
</dbReference>
<dbReference type="GO" id="GO:0035755">
    <property type="term" value="F:cardiolipin hydrolase activity"/>
    <property type="evidence" value="ECO:0000250"/>
    <property type="project" value="UniProtKB"/>
</dbReference>
<dbReference type="GO" id="GO:0046872">
    <property type="term" value="F:metal ion binding"/>
    <property type="evidence" value="ECO:0007669"/>
    <property type="project" value="UniProtKB-KW"/>
</dbReference>
<dbReference type="GO" id="GO:0042803">
    <property type="term" value="F:protein homodimerization activity"/>
    <property type="evidence" value="ECO:0000250"/>
    <property type="project" value="UniProtKB"/>
</dbReference>
<dbReference type="GO" id="GO:0016891">
    <property type="term" value="F:RNA endonuclease activity, producing 5'-phosphomonoesters"/>
    <property type="evidence" value="ECO:0000318"/>
    <property type="project" value="GO_Central"/>
</dbReference>
<dbReference type="GO" id="GO:0016042">
    <property type="term" value="P:lipid catabolic process"/>
    <property type="evidence" value="ECO:0007669"/>
    <property type="project" value="UniProtKB-KW"/>
</dbReference>
<dbReference type="GO" id="GO:0051321">
    <property type="term" value="P:meiotic cell cycle"/>
    <property type="evidence" value="ECO:0000250"/>
    <property type="project" value="UniProtKB"/>
</dbReference>
<dbReference type="GO" id="GO:0008053">
    <property type="term" value="P:mitochondrial fusion"/>
    <property type="evidence" value="ECO:0000250"/>
    <property type="project" value="UniProtKB"/>
</dbReference>
<dbReference type="GO" id="GO:0030719">
    <property type="term" value="P:P granule organization"/>
    <property type="evidence" value="ECO:0000250"/>
    <property type="project" value="UniProtKB"/>
</dbReference>
<dbReference type="GO" id="GO:0034587">
    <property type="term" value="P:piRNA processing"/>
    <property type="evidence" value="ECO:0000318"/>
    <property type="project" value="GO_Central"/>
</dbReference>
<dbReference type="GO" id="GO:0007286">
    <property type="term" value="P:spermatid development"/>
    <property type="evidence" value="ECO:0000250"/>
    <property type="project" value="UniProtKB"/>
</dbReference>
<dbReference type="CDD" id="cd09171">
    <property type="entry name" value="PLDc_vPLD6_like"/>
    <property type="match status" value="1"/>
</dbReference>
<dbReference type="FunFam" id="3.30.870.10:FF:000030">
    <property type="entry name" value="mitochondrial cardiolipin hydrolase"/>
    <property type="match status" value="1"/>
</dbReference>
<dbReference type="Gene3D" id="3.30.870.10">
    <property type="entry name" value="Endonuclease Chain A"/>
    <property type="match status" value="1"/>
</dbReference>
<dbReference type="InterPro" id="IPR025202">
    <property type="entry name" value="PLD-like_dom"/>
</dbReference>
<dbReference type="InterPro" id="IPR051406">
    <property type="entry name" value="PLD_domain"/>
</dbReference>
<dbReference type="InterPro" id="IPR001736">
    <property type="entry name" value="PLipase_D/transphosphatidylase"/>
</dbReference>
<dbReference type="PANTHER" id="PTHR43856">
    <property type="entry name" value="CARDIOLIPIN HYDROLASE"/>
    <property type="match status" value="1"/>
</dbReference>
<dbReference type="PANTHER" id="PTHR43856:SF1">
    <property type="entry name" value="MITOCHONDRIAL CARDIOLIPIN HYDROLASE"/>
    <property type="match status" value="1"/>
</dbReference>
<dbReference type="Pfam" id="PF13091">
    <property type="entry name" value="PLDc_2"/>
    <property type="match status" value="1"/>
</dbReference>
<dbReference type="SMART" id="SM00155">
    <property type="entry name" value="PLDc"/>
    <property type="match status" value="1"/>
</dbReference>
<dbReference type="SUPFAM" id="SSF56024">
    <property type="entry name" value="Phospholipase D/nuclease"/>
    <property type="match status" value="1"/>
</dbReference>
<dbReference type="PROSITE" id="PS50035">
    <property type="entry name" value="PLD"/>
    <property type="match status" value="1"/>
</dbReference>
<keyword id="KW-0221">Differentiation</keyword>
<keyword id="KW-0255">Endonuclease</keyword>
<keyword id="KW-0378">Hydrolase</keyword>
<keyword id="KW-0442">Lipid degradation</keyword>
<keyword id="KW-0443">Lipid metabolism</keyword>
<keyword id="KW-0469">Meiosis</keyword>
<keyword id="KW-0472">Membrane</keyword>
<keyword id="KW-0479">Metal-binding</keyword>
<keyword id="KW-0496">Mitochondrion</keyword>
<keyword id="KW-1000">Mitochondrion outer membrane</keyword>
<keyword id="KW-0540">Nuclease</keyword>
<keyword id="KW-1185">Reference proteome</keyword>
<keyword id="KW-0744">Spermatogenesis</keyword>
<keyword id="KW-0812">Transmembrane</keyword>
<keyword id="KW-1133">Transmembrane helix</keyword>
<gene>
    <name type="primary">pld6</name>
</gene>
<protein>
    <recommendedName>
        <fullName>Mitochondrial cardiolipin hydrolase</fullName>
        <ecNumber evidence="1">3.1.-.-</ecNumber>
    </recommendedName>
    <alternativeName>
        <fullName>Choline phosphatase 6</fullName>
    </alternativeName>
    <alternativeName>
        <fullName evidence="2">Mitochondrial phospholipase</fullName>
        <shortName evidence="2">MitoPLD</shortName>
        <ecNumber evidence="2">3.1.4.-</ecNumber>
    </alternativeName>
    <alternativeName>
        <fullName>Phosphatidylcholine-hydrolyzing phospholipase D6</fullName>
    </alternativeName>
    <alternativeName>
        <fullName>Phospholipase D6</fullName>
        <shortName>PLD 6</shortName>
    </alternativeName>
</protein>
<name>PLD6_XENLA</name>
<accession>A1L1C2</accession>
<organism>
    <name type="scientific">Xenopus laevis</name>
    <name type="common">African clawed frog</name>
    <dbReference type="NCBI Taxonomy" id="8355"/>
    <lineage>
        <taxon>Eukaryota</taxon>
        <taxon>Metazoa</taxon>
        <taxon>Chordata</taxon>
        <taxon>Craniata</taxon>
        <taxon>Vertebrata</taxon>
        <taxon>Euteleostomi</taxon>
        <taxon>Amphibia</taxon>
        <taxon>Batrachia</taxon>
        <taxon>Anura</taxon>
        <taxon>Pipoidea</taxon>
        <taxon>Pipidae</taxon>
        <taxon>Xenopodinae</taxon>
        <taxon>Xenopus</taxon>
        <taxon>Xenopus</taxon>
    </lineage>
</organism>
<evidence type="ECO:0000250" key="1">
    <source>
        <dbReference type="UniProtKB" id="Q5SWZ9"/>
    </source>
</evidence>
<evidence type="ECO:0000250" key="2">
    <source>
        <dbReference type="UniProtKB" id="Q8N2A8"/>
    </source>
</evidence>
<evidence type="ECO:0000255" key="3"/>
<evidence type="ECO:0000255" key="4">
    <source>
        <dbReference type="PROSITE-ProRule" id="PRU00153"/>
    </source>
</evidence>
<evidence type="ECO:0000305" key="5"/>
<reference key="1">
    <citation type="submission" date="2006-12" db="EMBL/GenBank/DDBJ databases">
        <authorList>
            <consortium name="NIH - Xenopus Gene Collection (XGC) project"/>
        </authorList>
    </citation>
    <scope>NUCLEOTIDE SEQUENCE [LARGE SCALE MRNA]</scope>
    <source>
        <tissue>Ovary</tissue>
    </source>
</reference>
<comment type="function">
    <text evidence="1 2">Presents phospholipase and nuclease activities, depending on the different physiological conditions. Plays a key role in mitochondrial fusion and fission via its phospholipase activity. In its phospholipase role, it uses the mitochondrial lipid cardiolipin as substrate to generate phosphatidate (PA or 1,2-diacyl-sn-glycero-3-phosphate), a second messenger signaling lipid. Production of PA facilitates Mitofusin-mediated fusion, whereas the cleavage of PA by the Lipin family of phosphatases produces diacylgycerol (DAG) which promotes mitochondrial fission. Regulates mitochondrial shape through facilitating mitochondrial fusion. During spermatogenesis, plays a critical role in PIWI-interacting RNA (piRNA) biogenesis (By similarity). piRNAs provide essential protection against the activity of mobile genetic elements. piRNA-mediated transposon silencing is thus critical for maintaining genome stability, in particular in germline cells when transposons are mobilized as a consequence of wide-spread genomic demethylation. Has been shown to be a backbone-non-specific, single strand-specific nuclease, cleaving either RNA or DNA substrates with similar affinity (By similarity). Produces 5' phosphate and 3' hydroxyl termini, suggesting it could directly participate in the processing of primary piRNA transcripts (By similarity). Has been proposed to act as a cardiolipin hydrolase to generate phosphatidic acid at mitochondrial surface. Although it cannot be excluded that it can act as a phospholipase in some circumstances, this activity could not be confirmed (By similarity).</text>
</comment>
<comment type="catalytic activity">
    <reaction evidence="2">
        <text>a cardiolipin + H2O = a 1,2-diacyl-sn-glycero-3-phospho-(1'-sn-glycerol) + a 1,2-diacyl-sn-glycero-3-phosphate + H(+)</text>
        <dbReference type="Rhea" id="RHEA:44884"/>
        <dbReference type="ChEBI" id="CHEBI:15377"/>
        <dbReference type="ChEBI" id="CHEBI:15378"/>
        <dbReference type="ChEBI" id="CHEBI:58608"/>
        <dbReference type="ChEBI" id="CHEBI:62237"/>
        <dbReference type="ChEBI" id="CHEBI:64716"/>
    </reaction>
    <physiologicalReaction direction="left-to-right" evidence="2">
        <dbReference type="Rhea" id="RHEA:44885"/>
    </physiologicalReaction>
</comment>
<comment type="subunit">
    <text evidence="1">Homodimer.</text>
</comment>
<comment type="subcellular location">
    <subcellularLocation>
        <location evidence="1">Mitochondrion outer membrane</location>
        <topology evidence="1">Single-pass membrane protein</topology>
    </subcellularLocation>
</comment>
<comment type="domain">
    <text evidence="2">In contrast to other members of the phospholipase D family, contains only one PLD phosphodiesterase domain, suggesting that it has a single half-catalytic and requires homodimerization to form a complete active site.</text>
</comment>
<comment type="similarity">
    <text evidence="5">Belongs to the phospholipase D family. MitoPLD/Zucchini subfamily.</text>
</comment>
<proteinExistence type="evidence at transcript level"/>